<evidence type="ECO:0000255" key="1">
    <source>
        <dbReference type="HAMAP-Rule" id="MF_01023"/>
    </source>
</evidence>
<keyword id="KW-0028">Amino-acid biosynthesis</keyword>
<keyword id="KW-0032">Aminotransferase</keyword>
<keyword id="KW-0368">Histidine biosynthesis</keyword>
<keyword id="KW-0663">Pyridoxal phosphate</keyword>
<keyword id="KW-1185">Reference proteome</keyword>
<keyword id="KW-0808">Transferase</keyword>
<accession>Q1GP30</accession>
<dbReference type="EC" id="2.6.1.9" evidence="1"/>
<dbReference type="EMBL" id="CP000356">
    <property type="protein sequence ID" value="ABF54592.1"/>
    <property type="molecule type" value="Genomic_DNA"/>
</dbReference>
<dbReference type="RefSeq" id="WP_011543156.1">
    <property type="nucleotide sequence ID" value="NC_008048.1"/>
</dbReference>
<dbReference type="SMR" id="Q1GP30"/>
<dbReference type="STRING" id="317655.Sala_2887"/>
<dbReference type="KEGG" id="sal:Sala_2887"/>
<dbReference type="eggNOG" id="COG0079">
    <property type="taxonomic scope" value="Bacteria"/>
</dbReference>
<dbReference type="HOGENOM" id="CLU_017584_3_3_5"/>
<dbReference type="OrthoDB" id="9809616at2"/>
<dbReference type="UniPathway" id="UPA00031">
    <property type="reaction ID" value="UER00012"/>
</dbReference>
<dbReference type="Proteomes" id="UP000006578">
    <property type="component" value="Chromosome"/>
</dbReference>
<dbReference type="GO" id="GO:0004400">
    <property type="term" value="F:histidinol-phosphate transaminase activity"/>
    <property type="evidence" value="ECO:0007669"/>
    <property type="project" value="UniProtKB-UniRule"/>
</dbReference>
<dbReference type="GO" id="GO:0030170">
    <property type="term" value="F:pyridoxal phosphate binding"/>
    <property type="evidence" value="ECO:0007669"/>
    <property type="project" value="InterPro"/>
</dbReference>
<dbReference type="GO" id="GO:0000105">
    <property type="term" value="P:L-histidine biosynthetic process"/>
    <property type="evidence" value="ECO:0007669"/>
    <property type="project" value="UniProtKB-UniRule"/>
</dbReference>
<dbReference type="CDD" id="cd00609">
    <property type="entry name" value="AAT_like"/>
    <property type="match status" value="1"/>
</dbReference>
<dbReference type="Gene3D" id="3.90.1150.10">
    <property type="entry name" value="Aspartate Aminotransferase, domain 1"/>
    <property type="match status" value="1"/>
</dbReference>
<dbReference type="Gene3D" id="3.40.640.10">
    <property type="entry name" value="Type I PLP-dependent aspartate aminotransferase-like (Major domain)"/>
    <property type="match status" value="1"/>
</dbReference>
<dbReference type="HAMAP" id="MF_01023">
    <property type="entry name" value="HisC_aminotrans_2"/>
    <property type="match status" value="1"/>
</dbReference>
<dbReference type="InterPro" id="IPR004839">
    <property type="entry name" value="Aminotransferase_I/II_large"/>
</dbReference>
<dbReference type="InterPro" id="IPR005861">
    <property type="entry name" value="HisP_aminotrans"/>
</dbReference>
<dbReference type="InterPro" id="IPR050106">
    <property type="entry name" value="HistidinolP_aminotransfase"/>
</dbReference>
<dbReference type="InterPro" id="IPR015424">
    <property type="entry name" value="PyrdxlP-dep_Trfase"/>
</dbReference>
<dbReference type="InterPro" id="IPR015421">
    <property type="entry name" value="PyrdxlP-dep_Trfase_major"/>
</dbReference>
<dbReference type="InterPro" id="IPR015422">
    <property type="entry name" value="PyrdxlP-dep_Trfase_small"/>
</dbReference>
<dbReference type="NCBIfam" id="TIGR01141">
    <property type="entry name" value="hisC"/>
    <property type="match status" value="1"/>
</dbReference>
<dbReference type="PANTHER" id="PTHR43643:SF3">
    <property type="entry name" value="HISTIDINOL-PHOSPHATE AMINOTRANSFERASE"/>
    <property type="match status" value="1"/>
</dbReference>
<dbReference type="PANTHER" id="PTHR43643">
    <property type="entry name" value="HISTIDINOL-PHOSPHATE AMINOTRANSFERASE 2"/>
    <property type="match status" value="1"/>
</dbReference>
<dbReference type="Pfam" id="PF00155">
    <property type="entry name" value="Aminotran_1_2"/>
    <property type="match status" value="1"/>
</dbReference>
<dbReference type="SUPFAM" id="SSF53383">
    <property type="entry name" value="PLP-dependent transferases"/>
    <property type="match status" value="1"/>
</dbReference>
<proteinExistence type="inferred from homology"/>
<protein>
    <recommendedName>
        <fullName evidence="1">Histidinol-phosphate aminotransferase</fullName>
        <ecNumber evidence="1">2.6.1.9</ecNumber>
    </recommendedName>
    <alternativeName>
        <fullName evidence="1">Imidazole acetol-phosphate transaminase</fullName>
    </alternativeName>
</protein>
<name>HIS8_SPHAL</name>
<comment type="catalytic activity">
    <reaction evidence="1">
        <text>L-histidinol phosphate + 2-oxoglutarate = 3-(imidazol-4-yl)-2-oxopropyl phosphate + L-glutamate</text>
        <dbReference type="Rhea" id="RHEA:23744"/>
        <dbReference type="ChEBI" id="CHEBI:16810"/>
        <dbReference type="ChEBI" id="CHEBI:29985"/>
        <dbReference type="ChEBI" id="CHEBI:57766"/>
        <dbReference type="ChEBI" id="CHEBI:57980"/>
        <dbReference type="EC" id="2.6.1.9"/>
    </reaction>
</comment>
<comment type="cofactor">
    <cofactor evidence="1">
        <name>pyridoxal 5'-phosphate</name>
        <dbReference type="ChEBI" id="CHEBI:597326"/>
    </cofactor>
</comment>
<comment type="pathway">
    <text evidence="1">Amino-acid biosynthesis; L-histidine biosynthesis; L-histidine from 5-phospho-alpha-D-ribose 1-diphosphate: step 7/9.</text>
</comment>
<comment type="subunit">
    <text evidence="1">Homodimer.</text>
</comment>
<comment type="similarity">
    <text evidence="1">Belongs to the class-II pyridoxal-phosphate-dependent aminotransferase family. Histidinol-phosphate aminotransferase subfamily.</text>
</comment>
<gene>
    <name evidence="1" type="primary">hisC</name>
    <name type="ordered locus">Sala_2887</name>
</gene>
<reference key="1">
    <citation type="journal article" date="2009" name="Proc. Natl. Acad. Sci. U.S.A.">
        <title>The genomic basis of trophic strategy in marine bacteria.</title>
        <authorList>
            <person name="Lauro F.M."/>
            <person name="McDougald D."/>
            <person name="Thomas T."/>
            <person name="Williams T.J."/>
            <person name="Egan S."/>
            <person name="Rice S."/>
            <person name="DeMaere M.Z."/>
            <person name="Ting L."/>
            <person name="Ertan H."/>
            <person name="Johnson J."/>
            <person name="Ferriera S."/>
            <person name="Lapidus A."/>
            <person name="Anderson I."/>
            <person name="Kyrpides N."/>
            <person name="Munk A.C."/>
            <person name="Detter C."/>
            <person name="Han C.S."/>
            <person name="Brown M.V."/>
            <person name="Robb F.T."/>
            <person name="Kjelleberg S."/>
            <person name="Cavicchioli R."/>
        </authorList>
    </citation>
    <scope>NUCLEOTIDE SEQUENCE [LARGE SCALE GENOMIC DNA]</scope>
    <source>
        <strain>DSM 13593 / LMG 18877 / RB2256</strain>
    </source>
</reference>
<feature type="chain" id="PRO_0000319788" description="Histidinol-phosphate aminotransferase">
    <location>
        <begin position="1"/>
        <end position="371"/>
    </location>
</feature>
<feature type="modified residue" description="N6-(pyridoxal phosphate)lysine" evidence="1">
    <location>
        <position position="227"/>
    </location>
</feature>
<organism>
    <name type="scientific">Sphingopyxis alaskensis (strain DSM 13593 / LMG 18877 / RB2256)</name>
    <name type="common">Sphingomonas alaskensis</name>
    <dbReference type="NCBI Taxonomy" id="317655"/>
    <lineage>
        <taxon>Bacteria</taxon>
        <taxon>Pseudomonadati</taxon>
        <taxon>Pseudomonadota</taxon>
        <taxon>Alphaproteobacteria</taxon>
        <taxon>Sphingomonadales</taxon>
        <taxon>Sphingomonadaceae</taxon>
        <taxon>Sphingopyxis</taxon>
    </lineage>
</organism>
<sequence>MTDATPTLTPKPWISGIAPYVPGKSAGADGRPLIKLSANENPLGTGEKARAAFAAVQSAPDALSRYPDPGSVELRAAIAAKYGLDPDRVICGNGSDELLHLAAGTYAGPGDEILYVRYGFAVYEIAARRVGAVPVEADDRDFATDVDALLAAVTDRTRVVYLANPNNPTGTLATREEVGRLYAGLPQNVLFVIDQAYAEYLTPDEDDGGLELAKTRPNVFVTRTFSKIHGLAAERIGWGYASADVIAALHRIRLPFNVTRAGQAAAVAALGDDDFVNRSRAHNARWRAWLAAELESLGNHGVRVVPSATNFLLVLFEGAVSAETVYHRLMDAGYIVRWLPGQGIPQALRMTIGTEDETRGLATAIRAALAG</sequence>